<name>NACB_GIBZE</name>
<keyword id="KW-0963">Cytoplasm</keyword>
<keyword id="KW-0539">Nucleus</keyword>
<keyword id="KW-0653">Protein transport</keyword>
<keyword id="KW-1185">Reference proteome</keyword>
<keyword id="KW-0678">Repressor</keyword>
<keyword id="KW-0804">Transcription</keyword>
<keyword id="KW-0805">Transcription regulation</keyword>
<keyword id="KW-0813">Transport</keyword>
<accession>Q4I283</accession>
<accession>A0A098DDP9</accession>
<accession>A0A0E0S0P8</accession>
<accession>A0A1C3YM77</accession>
<accession>A0A1I9F777</accession>
<accession>I1RWK2</accession>
<accession>V6RRR9</accession>
<sequence>MSDVQERLKKLGLGARTGTGKGTPRRKVKRAPARSGADDKKLQLALKKLNTQPIQAIEEVNMFKQDGNVIHFAAPKVHAAVPSNTFAIYGNGEDKELTELVPGILNQLGPDSLASLRKLAESYQNLQKEKGEDDDEIPDLVEGENFEGEPKVE</sequence>
<dbReference type="EMBL" id="DS231667">
    <property type="protein sequence ID" value="ESU14640.1"/>
    <property type="status" value="ALT_SEQ"/>
    <property type="molecule type" value="Genomic_DNA"/>
</dbReference>
<dbReference type="EMBL" id="HG970333">
    <property type="protein sequence ID" value="SCB65642.1"/>
    <property type="status" value="ALT_SEQ"/>
    <property type="molecule type" value="Genomic_DNA"/>
</dbReference>
<dbReference type="RefSeq" id="XP_011320065.1">
    <property type="nucleotide sequence ID" value="XM_011321763.1"/>
</dbReference>
<dbReference type="SMR" id="Q4I283"/>
<dbReference type="FunCoup" id="Q4I283">
    <property type="interactions" value="1258"/>
</dbReference>
<dbReference type="STRING" id="229533.Q4I283"/>
<dbReference type="GeneID" id="23555667"/>
<dbReference type="KEGG" id="fgr:FGSG_08675"/>
<dbReference type="eggNOG" id="KOG2240">
    <property type="taxonomic scope" value="Eukaryota"/>
</dbReference>
<dbReference type="HOGENOM" id="CLU_098726_2_1_1"/>
<dbReference type="InParanoid" id="Q4I283"/>
<dbReference type="OrthoDB" id="102232at110618"/>
<dbReference type="Proteomes" id="UP000070720">
    <property type="component" value="Chromosome 2"/>
</dbReference>
<dbReference type="GO" id="GO:0005737">
    <property type="term" value="C:cytoplasm"/>
    <property type="evidence" value="ECO:0007669"/>
    <property type="project" value="UniProtKB-SubCell"/>
</dbReference>
<dbReference type="GO" id="GO:0005634">
    <property type="term" value="C:nucleus"/>
    <property type="evidence" value="ECO:0007669"/>
    <property type="project" value="UniProtKB-SubCell"/>
</dbReference>
<dbReference type="GO" id="GO:0015031">
    <property type="term" value="P:protein transport"/>
    <property type="evidence" value="ECO:0007669"/>
    <property type="project" value="UniProtKB-KW"/>
</dbReference>
<dbReference type="CDD" id="cd22055">
    <property type="entry name" value="NAC_BTF3"/>
    <property type="match status" value="1"/>
</dbReference>
<dbReference type="FunFam" id="2.20.70.30:FF:000003">
    <property type="entry name" value="Nascent polypeptide-associated complex subunit beta"/>
    <property type="match status" value="1"/>
</dbReference>
<dbReference type="Gene3D" id="2.20.70.30">
    <property type="entry name" value="Nascent polypeptide-associated complex domain"/>
    <property type="match status" value="1"/>
</dbReference>
<dbReference type="InterPro" id="IPR039370">
    <property type="entry name" value="BTF3"/>
</dbReference>
<dbReference type="InterPro" id="IPR038187">
    <property type="entry name" value="NAC_A/B_dom_sf"/>
</dbReference>
<dbReference type="InterPro" id="IPR002715">
    <property type="entry name" value="Nas_poly-pep-assoc_cplx_dom"/>
</dbReference>
<dbReference type="PANTHER" id="PTHR10351">
    <property type="entry name" value="TRANSCRIPTION FACTOR BTF3 FAMILY MEMBER"/>
    <property type="match status" value="1"/>
</dbReference>
<dbReference type="Pfam" id="PF01849">
    <property type="entry name" value="NAC"/>
    <property type="match status" value="1"/>
</dbReference>
<dbReference type="SMART" id="SM01407">
    <property type="entry name" value="NAC"/>
    <property type="match status" value="1"/>
</dbReference>
<dbReference type="PROSITE" id="PS51151">
    <property type="entry name" value="NAC_AB"/>
    <property type="match status" value="1"/>
</dbReference>
<feature type="chain" id="PRO_0000273511" description="Nascent polypeptide-associated complex subunit beta">
    <location>
        <begin position="1"/>
        <end position="153"/>
    </location>
</feature>
<feature type="domain" description="NAC-A/B" evidence="2">
    <location>
        <begin position="36"/>
        <end position="101"/>
    </location>
</feature>
<feature type="region of interest" description="Disordered" evidence="3">
    <location>
        <begin position="1"/>
        <end position="40"/>
    </location>
</feature>
<feature type="region of interest" description="Disordered" evidence="3">
    <location>
        <begin position="126"/>
        <end position="153"/>
    </location>
</feature>
<feature type="compositionally biased region" description="Basic residues" evidence="3">
    <location>
        <begin position="23"/>
        <end position="32"/>
    </location>
</feature>
<feature type="compositionally biased region" description="Acidic residues" evidence="3">
    <location>
        <begin position="132"/>
        <end position="147"/>
    </location>
</feature>
<reference key="1">
    <citation type="journal article" date="2007" name="Science">
        <title>The Fusarium graminearum genome reveals a link between localized polymorphism and pathogen specialization.</title>
        <authorList>
            <person name="Cuomo C.A."/>
            <person name="Gueldener U."/>
            <person name="Xu J.-R."/>
            <person name="Trail F."/>
            <person name="Turgeon B.G."/>
            <person name="Di Pietro A."/>
            <person name="Walton J.D."/>
            <person name="Ma L.-J."/>
            <person name="Baker S.E."/>
            <person name="Rep M."/>
            <person name="Adam G."/>
            <person name="Antoniw J."/>
            <person name="Baldwin T."/>
            <person name="Calvo S.E."/>
            <person name="Chang Y.-L."/>
            <person name="DeCaprio D."/>
            <person name="Gale L.R."/>
            <person name="Gnerre S."/>
            <person name="Goswami R.S."/>
            <person name="Hammond-Kosack K."/>
            <person name="Harris L.J."/>
            <person name="Hilburn K."/>
            <person name="Kennell J.C."/>
            <person name="Kroken S."/>
            <person name="Magnuson J.K."/>
            <person name="Mannhaupt G."/>
            <person name="Mauceli E.W."/>
            <person name="Mewes H.-W."/>
            <person name="Mitterbauer R."/>
            <person name="Muehlbauer G."/>
            <person name="Muensterkoetter M."/>
            <person name="Nelson D."/>
            <person name="O'Donnell K."/>
            <person name="Ouellet T."/>
            <person name="Qi W."/>
            <person name="Quesneville H."/>
            <person name="Roncero M.I.G."/>
            <person name="Seong K.-Y."/>
            <person name="Tetko I.V."/>
            <person name="Urban M."/>
            <person name="Waalwijk C."/>
            <person name="Ward T.J."/>
            <person name="Yao J."/>
            <person name="Birren B.W."/>
            <person name="Kistler H.C."/>
        </authorList>
    </citation>
    <scope>NUCLEOTIDE SEQUENCE [LARGE SCALE GENOMIC DNA]</scope>
    <source>
        <strain>ATCC MYA-4620 / CBS 123657 / FGSC 9075 / NRRL 31084 / PH-1</strain>
    </source>
</reference>
<reference key="2">
    <citation type="journal article" date="2010" name="Nature">
        <title>Comparative genomics reveals mobile pathogenicity chromosomes in Fusarium.</title>
        <authorList>
            <person name="Ma L.-J."/>
            <person name="van der Does H.C."/>
            <person name="Borkovich K.A."/>
            <person name="Coleman J.J."/>
            <person name="Daboussi M.-J."/>
            <person name="Di Pietro A."/>
            <person name="Dufresne M."/>
            <person name="Freitag M."/>
            <person name="Grabherr M."/>
            <person name="Henrissat B."/>
            <person name="Houterman P.M."/>
            <person name="Kang S."/>
            <person name="Shim W.-B."/>
            <person name="Woloshuk C."/>
            <person name="Xie X."/>
            <person name="Xu J.-R."/>
            <person name="Antoniw J."/>
            <person name="Baker S.E."/>
            <person name="Bluhm B.H."/>
            <person name="Breakspear A."/>
            <person name="Brown D.W."/>
            <person name="Butchko R.A.E."/>
            <person name="Chapman S."/>
            <person name="Coulson R."/>
            <person name="Coutinho P.M."/>
            <person name="Danchin E.G.J."/>
            <person name="Diener A."/>
            <person name="Gale L.R."/>
            <person name="Gardiner D.M."/>
            <person name="Goff S."/>
            <person name="Hammond-Kosack K.E."/>
            <person name="Hilburn K."/>
            <person name="Hua-Van A."/>
            <person name="Jonkers W."/>
            <person name="Kazan K."/>
            <person name="Kodira C.D."/>
            <person name="Koehrsen M."/>
            <person name="Kumar L."/>
            <person name="Lee Y.-H."/>
            <person name="Li L."/>
            <person name="Manners J.M."/>
            <person name="Miranda-Saavedra D."/>
            <person name="Mukherjee M."/>
            <person name="Park G."/>
            <person name="Park J."/>
            <person name="Park S.-Y."/>
            <person name="Proctor R.H."/>
            <person name="Regev A."/>
            <person name="Ruiz-Roldan M.C."/>
            <person name="Sain D."/>
            <person name="Sakthikumar S."/>
            <person name="Sykes S."/>
            <person name="Schwartz D.C."/>
            <person name="Turgeon B.G."/>
            <person name="Wapinski I."/>
            <person name="Yoder O."/>
            <person name="Young S."/>
            <person name="Zeng Q."/>
            <person name="Zhou S."/>
            <person name="Galagan J."/>
            <person name="Cuomo C.A."/>
            <person name="Kistler H.C."/>
            <person name="Rep M."/>
        </authorList>
    </citation>
    <scope>GENOME REANNOTATION</scope>
    <source>
        <strain>ATCC MYA-4620 / CBS 123657 / FGSC 9075 / NRRL 31084 / PH-1</strain>
    </source>
</reference>
<reference key="3">
    <citation type="journal article" date="2015" name="BMC Genomics">
        <title>The completed genome sequence of the pathogenic ascomycete fungus Fusarium graminearum.</title>
        <authorList>
            <person name="King R."/>
            <person name="Urban M."/>
            <person name="Hammond-Kosack M.C.U."/>
            <person name="Hassani-Pak K."/>
            <person name="Hammond-Kosack K.E."/>
        </authorList>
    </citation>
    <scope>NUCLEOTIDE SEQUENCE [LARGE SCALE GENOMIC DNA]</scope>
    <source>
        <strain>ATCC MYA-4620 / CBS 123657 / FGSC 9075 / NRRL 31084 / PH-1</strain>
    </source>
</reference>
<comment type="function">
    <text evidence="1">Component of the nascent polypeptide-associated complex (NAC), a dynamic component of the ribosomal exit tunnel, protecting the emerging polypeptides from interaction with other cytoplasmic proteins to ensure appropriate nascent protein targeting. The NAC complex also promotes mitochondrial protein import by enhancing productive ribosome interactions with the outer mitochondrial membrane and blocks the inappropriate interaction of ribosomes translating non-secretory nascent polypeptides with translocation sites in the membrane of the endoplasmic reticulum. EGD1 may act as a transcription factor that exert a negative effect on the expression of several genes that are transcribed by RNA polymerase II.</text>
</comment>
<comment type="subunit">
    <text evidence="1">Part of the nascent polypeptide-associated complex (NAC), consisting of EGD2 and EGD1. NAC associates with ribosomes via EGD1 (By similarity).</text>
</comment>
<comment type="subcellular location">
    <subcellularLocation>
        <location evidence="1">Cytoplasm</location>
    </subcellularLocation>
    <subcellularLocation>
        <location evidence="1">Nucleus</location>
    </subcellularLocation>
    <text evidence="1">Predominantly cytoplasmic, may also transiently localize to the nucleus.</text>
</comment>
<comment type="similarity">
    <text evidence="4">Belongs to the NAC-beta family.</text>
</comment>
<comment type="sequence caution" evidence="4">
    <conflict type="erroneous gene model prediction">
        <sequence resource="EMBL-CDS" id="ESU14640"/>
    </conflict>
</comment>
<comment type="sequence caution" evidence="4">
    <conflict type="erroneous gene model prediction">
        <sequence resource="EMBL-CDS" id="SCB65642"/>
    </conflict>
</comment>
<proteinExistence type="inferred from homology"/>
<gene>
    <name type="primary">EGD1</name>
    <name type="ORF">FGRAMPH1_01T10541</name>
    <name type="ORF">FGRRES_16993_M</name>
    <name type="ORF">FGSG_08675</name>
</gene>
<organism>
    <name type="scientific">Gibberella zeae (strain ATCC MYA-4620 / CBS 123657 / FGSC 9075 / NRRL 31084 / PH-1)</name>
    <name type="common">Wheat head blight fungus</name>
    <name type="synonym">Fusarium graminearum</name>
    <dbReference type="NCBI Taxonomy" id="229533"/>
    <lineage>
        <taxon>Eukaryota</taxon>
        <taxon>Fungi</taxon>
        <taxon>Dikarya</taxon>
        <taxon>Ascomycota</taxon>
        <taxon>Pezizomycotina</taxon>
        <taxon>Sordariomycetes</taxon>
        <taxon>Hypocreomycetidae</taxon>
        <taxon>Hypocreales</taxon>
        <taxon>Nectriaceae</taxon>
        <taxon>Fusarium</taxon>
    </lineage>
</organism>
<protein>
    <recommendedName>
        <fullName>Nascent polypeptide-associated complex subunit beta</fullName>
        <shortName>NAC-beta</shortName>
    </recommendedName>
    <alternativeName>
        <fullName>Beta-NAC</fullName>
    </alternativeName>
</protein>
<evidence type="ECO:0000250" key="1"/>
<evidence type="ECO:0000255" key="2">
    <source>
        <dbReference type="PROSITE-ProRule" id="PRU00507"/>
    </source>
</evidence>
<evidence type="ECO:0000256" key="3">
    <source>
        <dbReference type="SAM" id="MobiDB-lite"/>
    </source>
</evidence>
<evidence type="ECO:0000305" key="4"/>